<reference key="1">
    <citation type="journal article" date="1998" name="J. Virol.">
        <title>A comprehensive panel of near-full-length clones and reference sequences for non-subtype B isolates of human immunodeficiency virus type 1.</title>
        <authorList>
            <person name="Gao F."/>
            <person name="Robertson D.L."/>
            <person name="Carruthers C.D."/>
            <person name="Morrison S.G."/>
            <person name="Jian B."/>
            <person name="Chen Y."/>
            <person name="Barre-Sinoussi F."/>
            <person name="Girard M."/>
            <person name="Srinivasan A."/>
            <person name="Abimiku A.G."/>
            <person name="Shaw G.M."/>
            <person name="Sharp P.M."/>
            <person name="Hahn B.H."/>
        </authorList>
    </citation>
    <scope>NUCLEOTIDE SEQUENCE [GENOMIC DNA]</scope>
</reference>
<sequence length="1430" mass="161004">MGARASVLSGGKLDAWEKIRLRPGGKKKYRLKHLVWASRELERFALDPGLLETSEGCRKIIGQLQPSLQTGSEELKSLYNTIAVLYYVHQKVEVKDTKEALEKLEEEQNKGRQKTQQATAEKGVSQNYPIVQNLQGQMVHQSLSPRTLNAWVKVIEEKAFSPEVIPMFSALSEGATPQDLNTMLNTVGGHQAAMQMLKDTINEEAAEWDRLHPTQAGPIPPGQIREPRGSDIAGTTSTLQEQIQWMTGNPPVPVGEMYKRWIILGLNKIVRMYSPVGILDIRQGPKEPFRDYVDRFFKTLRAEQATQEVKGWMTDTLLVQNANPDCKTILKALGPGATLEEMMTACQGVGGPSHKARVLAEAMSQATNTAIMMQKSNFKGQRRIVKCFNCGKEGHIAKNCRAPRKKGCWKCGREGHQMKDCTERQAKFFRENLAFQQGEARKLHPEQARAVSPASRELQVRGGDNPISEAGAERRGTVPSLSFPQITLWQRPLVTIRVGGQLKEALLDTGADDTVLEDVNLPGKWKPKMIGGIGGFIKVKQYDSILIEICGHRAIGTVLVGPTPVNIIGRNMLTQIGCTLHFPISPIETVPVKLKPGMDGPKVKQWPLTEEKIKALTEICMEMEKEGKISKIGPENPYNTPVFAIKKKDSTKWRKLVDFRELNKRTQDFWEVQLGIPHPAGLKKKKSVTVLDVGDAYFSVPLDKDFRKYTASTIPSTNNETPGVRYQYNVLPQGWKGSPAIFQYSMTKILDPFRAKNPDIVIYQYMDDLYVGSDLEIGQHRTKIEELREHLLKWGLTTPDKKHQKEPPFLWMGYELHPDKWTVQPIQLPDKDSWTVNDIQKLVGKLNWASQIYPGIKVKQLCKLLRGAKALTDIVPLTTEAELELAENREILKEPVHGAYYDPSKDLIAEIQKQGQGQWTYQIYQEPFKNLKTGKYAKMRSAHTNDVKQLTEAVQKISLESIVIWGKTPKFRLPILKETWDTWWTEYWQATWIPEWEFVNTPPLVKLWYQLETEPIVGAETFYVDGASNRETKKGKAGYVTDRGRQKAVSLTETTNQKAELQAIQLALQDSGSEVNIVTDSQYALGIIQAQPDKSESELVNQIIEQLIKKEKVYLSWVPAHKGIGGNEQVDKLVSAGIRKVLFLDGIDKAQEEHEKYHNNWRAMASDFNIPAVVAKEIVASCDKCQLKGEAMHGQVDCSPGIWQLDCTHLEGKIILVAVHVASGYLEAEVIPAETGQETAYFLLKLAGRWPVKTIHTDNGTNFTSATVKAACWWAGIQQEFGIPYNPQSQGVVESMNKELKKIIGQIRDQAEHLKTAVQMAVFIHNFKRKGGIGGYSAGERTIDIIATDIQTRELQKQIIKIQNFRVYYRDSRDPVWKGPAKLLWKGEGAVVIQDNSEIKVVPRRKAKIIRDYGKQMAGDDCVAGRQDED</sequence>
<name>POL_HV193</name>
<evidence type="ECO:0000250" key="1"/>
<evidence type="ECO:0000250" key="2">
    <source>
        <dbReference type="UniProtKB" id="P03347"/>
    </source>
</evidence>
<evidence type="ECO:0000250" key="3">
    <source>
        <dbReference type="UniProtKB" id="P03366"/>
    </source>
</evidence>
<evidence type="ECO:0000250" key="4">
    <source>
        <dbReference type="UniProtKB" id="P03367"/>
    </source>
</evidence>
<evidence type="ECO:0000250" key="5">
    <source>
        <dbReference type="UniProtKB" id="P04585"/>
    </source>
</evidence>
<evidence type="ECO:0000250" key="6">
    <source>
        <dbReference type="UniProtKB" id="P12493"/>
    </source>
</evidence>
<evidence type="ECO:0000250" key="7">
    <source>
        <dbReference type="UniProtKB" id="P12497"/>
    </source>
</evidence>
<evidence type="ECO:0000255" key="8"/>
<evidence type="ECO:0000255" key="9">
    <source>
        <dbReference type="PROSITE-ProRule" id="PRU00047"/>
    </source>
</evidence>
<evidence type="ECO:0000255" key="10">
    <source>
        <dbReference type="PROSITE-ProRule" id="PRU00275"/>
    </source>
</evidence>
<evidence type="ECO:0000255" key="11">
    <source>
        <dbReference type="PROSITE-ProRule" id="PRU00405"/>
    </source>
</evidence>
<evidence type="ECO:0000255" key="12">
    <source>
        <dbReference type="PROSITE-ProRule" id="PRU00408"/>
    </source>
</evidence>
<evidence type="ECO:0000255" key="13">
    <source>
        <dbReference type="PROSITE-ProRule" id="PRU00450"/>
    </source>
</evidence>
<evidence type="ECO:0000255" key="14">
    <source>
        <dbReference type="PROSITE-ProRule" id="PRU00457"/>
    </source>
</evidence>
<evidence type="ECO:0000255" key="15">
    <source>
        <dbReference type="PROSITE-ProRule" id="PRU00506"/>
    </source>
</evidence>
<evidence type="ECO:0000255" key="16">
    <source>
        <dbReference type="PROSITE-ProRule" id="PRU10094"/>
    </source>
</evidence>
<evidence type="ECO:0000256" key="17">
    <source>
        <dbReference type="SAM" id="MobiDB-lite"/>
    </source>
</evidence>
<evidence type="ECO:0000305" key="18"/>
<comment type="function">
    <molecule>Gag-Pol polyprotein</molecule>
    <text evidence="1">Mediates, with Gag polyprotein, the essential events in virion assembly, including binding the plasma membrane, making the protein-protein interactions necessary to create spherical particles, recruiting the viral Env proteins, and packaging the genomic RNA via direct interactions with the RNA packaging sequence (Psi). Gag-Pol polyprotein may regulate its own translation, by the binding genomic RNA in the 5'-UTR. At low concentration, the polyprotein would promote translation, whereas at high concentration, the polyprotein would encapsidate genomic RNA and then shut off translation.</text>
</comment>
<comment type="function">
    <molecule>Matrix protein p17</molecule>
    <text evidence="7">Targets the polyprotein to the plasma membrane via a multipartite membrane-binding signal, that includes its myristoylated N-terminus. Matrix protein is part of the pre-integration complex. Implicated in the release from host cell mediated by Vpu. Binds to RNA.</text>
</comment>
<comment type="function">
    <molecule>Capsid protein p24</molecule>
    <text evidence="5 7">Forms the conical core that encapsulates the genomic RNA-nucleocapsid complex in the virion. Most core are conical, with only 7% tubular. The core is constituted by capsid protein hexamer subunits. The core is disassembled soon after virion entry (By similarity). Host restriction factors such as TRIM5-alpha or TRIMCyp bind retroviral capsids and cause premature capsid disassembly, leading to blocks in reverse transcription. Capsid restriction by TRIM5 is one of the factors which restricts HIV-1 to the human species. Host PIN1 apparently facilitates the virion uncoating. On the other hand, interactions with PDZD8 or CYPA stabilize the capsid.</text>
</comment>
<comment type="function">
    <molecule>Nucleocapsid protein p7</molecule>
    <text evidence="5">Encapsulates and protects viral dimeric unspliced genomic RNA (gRNA). Binds these RNAs through its zinc fingers. Acts as a nucleic acid chaperone which is involved in rearangement of nucleic acid secondary structure during gRNA retrotranscription. Also facilitates template switch leading to recombination. As part of the polyprotein, participates in gRNA dimerization, packaging, tRNA incorporation and virion assembly.</text>
</comment>
<comment type="function">
    <molecule>Protease</molecule>
    <text evidence="5 10">Aspartyl protease that mediates proteolytic cleavages of Gag and Gag-Pol polyproteins during or shortly after the release of the virion from the plasma membrane. Cleavages take place as an ordered, step-wise cascade to yield mature proteins. This process is called maturation. Displays maximal activity during the budding process just prior to particle release from the cell. Also cleaves Nef and Vif, probably concomitantly with viral structural proteins on maturation of virus particles. Hydrolyzes host EIF4GI and PABP1 in order to shut off the capped cellular mRNA translation. The resulting inhibition of cellular protein synthesis serves to ensure maximal viral gene expression and to evade host immune response. Also mediates cleavage of host YTHDF3. Mediates cleavage of host CARD8, thereby activating the CARD8 inflammasome, leading to the clearance of latent HIV-1 in patient CD4(+) T-cells after viral reactivation; in contrast, HIV-1 can evade CARD8-sensing when its protease remains inactive in infected cells prior to viral budding (By similarity).</text>
</comment>
<comment type="function">
    <molecule>Reverse transcriptase/ribonuclease H</molecule>
    <text evidence="5">Multifunctional enzyme that converts the viral RNA genome into dsDNA in the cytoplasm, shortly after virus entry into the cell. This enzyme displays a DNA polymerase activity that can copy either DNA or RNA templates, and a ribonuclease H (RNase H) activity that cleaves the RNA strand of RNA-DNA heteroduplexes in a partially processive 3' to 5' endonucleasic mode. Conversion of viral genomic RNA into dsDNA requires many steps. A tRNA(3)-Lys binds to the primer-binding site (PBS) situated at the 5'-end of the viral RNA. RT uses the 3' end of the tRNA primer to perform a short round of RNA-dependent minus-strand DNA synthesis. The reading proceeds through the U5 region and ends after the repeated (R) region which is present at both ends of viral RNA. The portion of the RNA-DNA heteroduplex is digested by the RNase H, resulting in a ssDNA product attached to the tRNA primer. This ssDNA/tRNA hybridizes with the identical R region situated at the 3' end of viral RNA. This template exchange, known as minus-strand DNA strong stop transfer, can be either intra- or intermolecular. RT uses the 3' end of this newly synthesized short ssDNA to perform the RNA-dependent minus-strand DNA synthesis of the whole template. RNase H digests the RNA template except for two polypurine tracts (PPTs) situated at the 5'-end and near the center of the genome. It is not clear if both polymerase and RNase H activities are simultaneous. RNase H probably can proceed both in a polymerase-dependent (RNA cut into small fragments by the same RT performing DNA synthesis) and a polymerase-independent mode (cleavage of remaining RNA fragments by free RTs). Secondly, RT performs DNA-directed plus-strand DNA synthesis using the PPTs that have not been removed by RNase H as primers. PPTs and tRNA primers are then removed by RNase H. The 3' and 5' ssDNA PBS regions hybridize to form a circular dsDNA intermediate. Strand displacement synthesis by RT to the PBS and PPT ends produces a blunt ended, linear dsDNA copy of the viral genome that includes long terminal repeats (LTRs) at both ends.</text>
</comment>
<comment type="function">
    <text evidence="5">Integrase catalyzes viral DNA integration into the host chromosome, by performing a series of DNA cutting and joining reactions. This enzyme activity takes place after virion entry into a cell and reverse transcription of the RNA genome in dsDNA. The first step in the integration process is 3' processing. This step requires a complex comprising the viral genome, matrix protein, Vpr and integrase. This complex is called the pre-integration complex (PIC). The integrase protein removes 2 nucleotides from each 3' end of the viral DNA, leaving recessed CA OH's at the 3' ends. In the second step, the PIC enters cell nucleus. This process is mediated through integrase and Vpr proteins, and allows the virus to infect a non dividing cell. This ability to enter the nucleus is specific of lentiviruses, other retroviruses cannot and rely on cell division to access cell chromosomes. In the third step, termed strand transfer, the integrase protein joins the previously processed 3' ends to the 5' ends of strands of target cellular DNA at the site of integration. The 5'-ends are produced by integrase-catalyzed staggered cuts, 5 bp apart. A Y-shaped, gapped, recombination intermediate results, with the 5'-ends of the viral DNA strands and the 3' ends of target DNA strands remaining unjoined, flanking a gap of 5 bp. The last step is viral DNA integration into host chromosome. This involves host DNA repair synthesis in which the 5 bp gaps between the unjoined strands are filled in and then ligated. Since this process occurs at both cuts flanking the HIV genome, a 5 bp duplication of host DNA is produced at the ends of HIV-1 integration. Alternatively, Integrase may catalyze the excision of viral DNA just after strand transfer, this is termed disintegration.</text>
</comment>
<comment type="catalytic activity">
    <reaction evidence="10">
        <text>Specific for a P1 residue that is hydrophobic, and P1' variable, but often Pro.</text>
        <dbReference type="EC" id="3.4.23.16"/>
    </reaction>
</comment>
<comment type="catalytic activity">
    <reaction evidence="1">
        <text>Endohydrolysis of RNA in RNA/DNA hybrids. Three different cleavage modes: 1. sequence-specific internal cleavage of RNA. Human immunodeficiency virus type 1 and Moloney murine leukemia virus enzymes prefer to cleave the RNA strand one nucleotide away from the RNA-DNA junction. 2. RNA 5'-end directed cleavage 13-19 nucleotides from the RNA end. 3. DNA 3'-end directed cleavage 15-20 nucleotides away from the primer terminus.</text>
        <dbReference type="EC" id="3.1.26.13"/>
    </reaction>
</comment>
<comment type="catalytic activity">
    <reaction evidence="1">
        <text>3'-end directed exonucleolytic cleavage of viral RNA-DNA hybrid.</text>
        <dbReference type="EC" id="3.1.13.2"/>
    </reaction>
</comment>
<comment type="catalytic activity">
    <reaction evidence="11">
        <text>DNA(n) + a 2'-deoxyribonucleoside 5'-triphosphate = DNA(n+1) + diphosphate</text>
        <dbReference type="Rhea" id="RHEA:22508"/>
        <dbReference type="Rhea" id="RHEA-COMP:17339"/>
        <dbReference type="Rhea" id="RHEA-COMP:17340"/>
        <dbReference type="ChEBI" id="CHEBI:33019"/>
        <dbReference type="ChEBI" id="CHEBI:61560"/>
        <dbReference type="ChEBI" id="CHEBI:173112"/>
        <dbReference type="EC" id="2.7.7.49"/>
    </reaction>
</comment>
<comment type="catalytic activity">
    <reaction evidence="11">
        <text>DNA(n) + a 2'-deoxyribonucleoside 5'-triphosphate = DNA(n+1) + diphosphate</text>
        <dbReference type="Rhea" id="RHEA:22508"/>
        <dbReference type="Rhea" id="RHEA-COMP:17339"/>
        <dbReference type="Rhea" id="RHEA-COMP:17340"/>
        <dbReference type="ChEBI" id="CHEBI:33019"/>
        <dbReference type="ChEBI" id="CHEBI:61560"/>
        <dbReference type="ChEBI" id="CHEBI:173112"/>
        <dbReference type="EC" id="2.7.7.7"/>
    </reaction>
</comment>
<comment type="cofactor">
    <cofactor evidence="1">
        <name>Mg(2+)</name>
        <dbReference type="ChEBI" id="CHEBI:18420"/>
    </cofactor>
    <text evidence="1">Binds 2 magnesium ions for reverse transcriptase polymerase activity.</text>
</comment>
<comment type="cofactor">
    <cofactor evidence="1">
        <name>Mg(2+)</name>
        <dbReference type="ChEBI" id="CHEBI:18420"/>
    </cofactor>
    <text evidence="1">Binds 2 magnesium ions for ribonuclease H (RNase H) activity. Substrate-binding is a precondition for magnesium binding.</text>
</comment>
<comment type="cofactor">
    <cofactor evidence="1">
        <name>Mg(2+)</name>
        <dbReference type="ChEBI" id="CHEBI:18420"/>
    </cofactor>
    <text evidence="1">Magnesium ions are required for integrase activity. Binds at least 1, maybe 2 magnesium ions.</text>
</comment>
<comment type="activity regulation">
    <text evidence="1">Protease: The viral protease is inhibited by many synthetic protease inhibitors (PIs), such as amprenavir, atazanavir, indinavir, loprinavir, nelfinavir, ritonavir and saquinavir. Use of protease inhibitors in tritherapy regimens permit more ambitious therapeutic strategies. Reverse transcriptase/ribonuclease H: RT can be inhibited either by nucleoside RT inhibitors (NRTIs) or by non nucleoside RT inhibitors (NNRTIs). NRTIs act as chain terminators, whereas NNRTIs inhibit DNA polymerization by binding a small hydrophobic pocket near the RT active site and inducing an allosteric change in this region. Classical NRTIs are abacavir, adefovir (PMEA), didanosine (ddI), lamivudine (3TC), stavudine (d4T), tenofovir (PMPA), zalcitabine (ddC), and zidovudine (AZT). Classical NNRTIs are atevirdine (BHAP U-87201E), delavirdine, efavirenz (DMP-266), emivirine (I-EBU), and nevirapine (BI-RG-587). The tritherapies used as a basic effective treatment of AIDS associate two NRTIs and one NNRTI.</text>
</comment>
<comment type="subunit">
    <molecule>Matrix protein p17</molecule>
    <text evidence="5 7">Homotrimer; further assembles as hexamers of trimers (By similarity). Interacts with gp41 (via C-terminus) (By similarity). Interacts with host CALM1; this interaction induces a conformational change in the Matrix protein, triggering exposure of the myristate group (By similarity). Interacts with host AP3D1; this interaction allows the polyprotein trafficking to multivesicular bodies during virus assembly (By similarity). Part of the pre-integration complex (PIC) which is composed of viral genome, matrix protein, Vpr and integrase (By similarity).</text>
</comment>
<comment type="subunit">
    <molecule>Capsid protein p24</molecule>
    <text evidence="5 7">Homodimer; the homodimer further multimerizes as homohexamers or homopentamers. Interacts with human PPIA/CYPA (By similarity); This interaction stabilizes the capsid. Interacts with human NUP153 (By similarity). Interacts with host PDZD8; this interaction stabilizes the capsid (By similarity). Interacts with monkey TRIM5; this interaction destabilizes the capsid (By similarity).</text>
</comment>
<comment type="subunit">
    <molecule>Protease</molecule>
    <text evidence="5 7">Homodimer, whose active site consists of two apposed aspartic acid residues.</text>
</comment>
<comment type="subunit">
    <molecule>Reverse transcriptase/ribonuclease H</molecule>
    <text evidence="3">Heterodimer of p66 RT and p51 RT (RT p66/p51) (By similarity). Heterodimerization of RT is essential for DNA polymerase activity (By similarity). The overall folding of the subdomains is similar in p66 RT and p51 RT but the spatial arrangements of the subdomains are dramatically different (By similarity).</text>
</comment>
<comment type="subunit">
    <molecule>Integrase</molecule>
    <text evidence="4 5 7">Homotetramer; may further associate as a homohexadecamer (By similarity). Part of the pre-integration complex (PIC) which is composed of viral genome, matrix protein, Vpr and integrase. Interacts with human SMARCB1/INI1 and human PSIP1/LEDGF isoform 1. Interacts with human KPNA3; this interaction might play a role in nuclear import of the pre-integration complex (By similarity). Interacts with human NUP153; this interaction might play a role in nuclear import of the pre-integration complex (By similarity).</text>
</comment>
<comment type="subcellular location">
    <molecule>Gag-Pol polyprotein</molecule>
    <subcellularLocation>
        <location>Host cell membrane</location>
        <topology>Lipid-anchor</topology>
    </subcellularLocation>
    <subcellularLocation>
        <location>Host endosome</location>
        <location>Host multivesicular body</location>
    </subcellularLocation>
    <text evidence="7">These locations are linked to virus assembly sites. The main location is the cell membrane, but under some circumstances, late endosomal compartments can serve as productive sites for virion assembly.</text>
</comment>
<comment type="subcellular location">
    <molecule>Matrix protein p17</molecule>
    <subcellularLocation>
        <location>Virion membrane</location>
        <topology evidence="18">Lipid-anchor</topology>
    </subcellularLocation>
    <subcellularLocation>
        <location evidence="1">Host nucleus</location>
    </subcellularLocation>
    <subcellularLocation>
        <location evidence="1">Host cytoplasm</location>
    </subcellularLocation>
</comment>
<comment type="subcellular location">
    <molecule>Capsid protein p24</molecule>
    <subcellularLocation>
        <location evidence="18">Virion</location>
    </subcellularLocation>
</comment>
<comment type="subcellular location">
    <molecule>Nucleocapsid protein p7</molecule>
    <subcellularLocation>
        <location evidence="18">Virion</location>
    </subcellularLocation>
</comment>
<comment type="subcellular location">
    <molecule>Reverse transcriptase/ribonuclease H</molecule>
    <subcellularLocation>
        <location evidence="18">Virion</location>
    </subcellularLocation>
</comment>
<comment type="subcellular location">
    <molecule>Integrase</molecule>
    <subcellularLocation>
        <location evidence="18">Virion</location>
    </subcellularLocation>
    <subcellularLocation>
        <location evidence="18">Host nucleus</location>
    </subcellularLocation>
    <subcellularLocation>
        <location evidence="18">Host cytoplasm</location>
    </subcellularLocation>
    <text evidence="18">Nuclear at initial phase, cytoplasmic at assembly.</text>
</comment>
<comment type="alternative products">
    <event type="ribosomal frameshifting"/>
    <isoform>
        <id>O89290-1</id>
        <name>Gag-Pol polyprotein</name>
        <sequence type="displayed"/>
    </isoform>
    <isoform>
        <id>O89291-1</id>
        <name>Gag polyprotein</name>
        <sequence type="external"/>
    </isoform>
    <text>Translation results in the formation of the Gag polyprotein most of the time. Ribosomal frameshifting at the gag-pol genes boundary occurs at low frequency and produces the Gag-Pol polyprotein. This strategy of translation probably allows the virus to modulate the quantity of each viral protein. Maintenance of a correct Gag to Gag-Pol ratio is essential for RNA dimerization and viral infectivity.</text>
</comment>
<comment type="domain">
    <molecule>Reverse transcriptase/ribonuclease H</molecule>
    <text evidence="1">RT is structured in five subdomains: finger, palm, thumb, connection and RNase H. Within the palm subdomain, the 'primer grip' region is thought to be involved in the positioning of the primer terminus for accommodating the incoming nucleotide. The RNase H domain stabilizes the association of RT with primer-template.</text>
</comment>
<comment type="domain">
    <molecule>Reverse transcriptase/ribonuclease H</molecule>
    <text evidence="1">The tryptophan repeat motif is involved in RT p66/p51 dimerization (By similarity).</text>
</comment>
<comment type="domain">
    <molecule>Integrase</molecule>
    <text evidence="1">The core domain contains the D-x(n)-D-x(35)-E motif, named for the phylogenetically conserved glutamic acid and aspartic acid residues and the invariant 35 amino acid spacing between the second and third acidic residues. Each acidic residue of the D,D(35)E motif is independently essential for the 3'-processing and strand transfer activities of purified integrase protein.</text>
</comment>
<comment type="PTM">
    <molecule>Gag-Pol polyprotein</molecule>
    <text evidence="5 11">Specific enzymatic cleavages by the viral protease yield mature proteins. The protease is released by autocatalytic cleavage. The polyprotein is cleaved during and after budding, this process is termed maturation. Proteolytic cleavage of p66 RT removes the RNase H domain to yield the p51 RT subunit. Nucleocapsid protein p7 might be further cleaved after virus entry.</text>
</comment>
<comment type="PTM">
    <molecule>Matrix protein p17</molecule>
    <text evidence="5">Tyrosine phosphorylated presumably in the virion by a host kinase. Phosphorylation is apparently not a major regulator of membrane association.</text>
</comment>
<comment type="PTM">
    <molecule>Capsid protein p24</molecule>
    <text evidence="6">Phosphorylated possibly by host MAPK1; this phosphorylation is necessary for Pin1-mediated virion uncoating.</text>
</comment>
<comment type="PTM">
    <molecule>Nucleocapsid protein p7</molecule>
    <text evidence="2">Methylated by host PRMT6, impairing its function by reducing RNA annealing and the initiation of reverse transcription.</text>
</comment>
<comment type="miscellaneous">
    <molecule>Reverse transcriptase/ribonuclease H</molecule>
    <text evidence="1">Error-prone enzyme that lacks a proof-reading function. High mutations rate is a direct consequence of this characteristic. RT also displays frequent template switching leading to high recombination rate. Recombination mostly occurs between homologous regions of the two copackaged RNA genomes. If these two RNA molecules derive from different viral strains, reverse transcription will give rise to highly recombinated proviral DNAs.</text>
</comment>
<comment type="miscellaneous">
    <text>HIV-1 lineages are divided in three main groups, M (for Major), O (for Outlier), and N (for New, or Non-M, Non-O). The vast majority of strains found worldwide belong to the group M. Group O seems to be endemic to and largely confined to Cameroon and neighboring countries in West Central Africa, where these viruses represent a small minority of HIV-1 strains. The group N is represented by a limited number of isolates from Cameroonian persons. The group M is further subdivided in 9 clades or subtypes (A to D, F to H, J and K).</text>
</comment>
<comment type="miscellaneous">
    <text>Resistance to inhibitors associated with mutations are observed both in viral protease and in reverse transcriptase. Most of the time, single mutations confer only a modest reduction in drug susceptibility. Combination of several mutations is usually required to develop a high-level drug resistance. These mutations are predominantly found in clade B viruses and not in other genotypes. They are listed in the clade B representative isolate HXB2 (AC P04585).</text>
</comment>
<comment type="miscellaneous">
    <molecule>Isoform Gag-Pol polyprotein</molecule>
    <text>Produced by -1 ribosomal frameshifting.</text>
</comment>
<comment type="online information" name="HIV drug resistance mutations">
    <link uri="https://www.iasusa.org/hiv-drug-resistance/hiv-drug-resistance-mutations/"/>
</comment>
<comment type="online information" name="hivdb">
    <link uri="https://hivdb.stanford.edu"/>
    <text>HIV drug resistance database</text>
</comment>
<feature type="initiator methionine" description="Removed; by host" evidence="1">
    <location>
        <position position="1"/>
    </location>
</feature>
<feature type="chain" id="PRO_0000261257" description="Gag-Pol polyprotein">
    <location>
        <begin position="2"/>
        <end position="1430"/>
    </location>
</feature>
<feature type="chain" id="PRO_0000246466" description="Matrix protein p17" evidence="1">
    <location>
        <begin position="2"/>
        <end position="128"/>
    </location>
</feature>
<feature type="chain" id="PRO_0000246467" description="Capsid protein p24" evidence="1">
    <location>
        <begin position="129"/>
        <end position="359"/>
    </location>
</feature>
<feature type="peptide" id="PRO_0000246468" description="Spacer peptide 1" evidence="1">
    <location>
        <begin position="360"/>
        <end position="372"/>
    </location>
</feature>
<feature type="chain" id="PRO_0000246469" description="Nucleocapsid protein p7" evidence="1">
    <location>
        <begin position="373"/>
        <end position="427"/>
    </location>
</feature>
<feature type="peptide" id="PRO_0000246706" description="Transframe peptide" evidence="8">
    <location>
        <begin position="428"/>
        <end position="435"/>
    </location>
</feature>
<feature type="chain" id="PRO_0000246470" description="p6-pol" evidence="8">
    <location>
        <begin position="436"/>
        <end position="483"/>
    </location>
</feature>
<feature type="chain" id="PRO_0000246471" description="Protease" evidence="1">
    <location>
        <begin position="484"/>
        <end position="582"/>
    </location>
</feature>
<feature type="chain" id="PRO_0000246472" description="Reverse transcriptase/ribonuclease H" evidence="1">
    <location>
        <begin position="583"/>
        <end position="1142"/>
    </location>
</feature>
<feature type="chain" id="PRO_0000246473" description="p51 RT" evidence="1">
    <location>
        <begin position="583"/>
        <end position="1022"/>
    </location>
</feature>
<feature type="chain" id="PRO_0000246474" description="p15" evidence="1">
    <location>
        <begin position="1023"/>
        <end position="1142"/>
    </location>
</feature>
<feature type="chain" id="PRO_0000246475" description="Integrase" evidence="1">
    <location>
        <begin position="1143"/>
        <end position="1430"/>
    </location>
</feature>
<feature type="domain" description="Peptidase A2" evidence="10">
    <location>
        <begin position="503"/>
        <end position="572"/>
    </location>
</feature>
<feature type="domain" description="Reverse transcriptase" evidence="11">
    <location>
        <begin position="626"/>
        <end position="816"/>
    </location>
</feature>
<feature type="domain" description="RNase H type-1" evidence="12">
    <location>
        <begin position="1016"/>
        <end position="1139"/>
    </location>
</feature>
<feature type="domain" description="Integrase catalytic" evidence="14">
    <location>
        <begin position="1196"/>
        <end position="1346"/>
    </location>
</feature>
<feature type="zinc finger region" description="CCHC-type 1" evidence="9">
    <location>
        <begin position="385"/>
        <end position="402"/>
    </location>
</feature>
<feature type="zinc finger region" description="CCHC-type 2" evidence="9">
    <location>
        <begin position="406"/>
        <end position="423"/>
    </location>
</feature>
<feature type="zinc finger region" description="Integrase-type" evidence="13">
    <location>
        <begin position="1145"/>
        <end position="1186"/>
    </location>
</feature>
<feature type="DNA-binding region" description="Integrase-type" evidence="15">
    <location>
        <begin position="1365"/>
        <end position="1412"/>
    </location>
</feature>
<feature type="region of interest" description="Interaction with Gp41" evidence="7">
    <location>
        <begin position="7"/>
        <end position="31"/>
    </location>
</feature>
<feature type="region of interest" description="Interaction with host CALM1" evidence="5">
    <location>
        <begin position="8"/>
        <end position="43"/>
    </location>
</feature>
<feature type="region of interest" description="Interaction with host AP3D1" evidence="7">
    <location>
        <begin position="12"/>
        <end position="19"/>
    </location>
</feature>
<feature type="region of interest" description="Interaction with membrane phosphatidylinositol 4,5-bisphosphate and RNA" evidence="7">
    <location>
        <begin position="14"/>
        <end position="33"/>
    </location>
</feature>
<feature type="region of interest" description="Interaction with membrane phosphatidylinositol 4,5-bisphosphate" evidence="7">
    <location>
        <begin position="73"/>
        <end position="77"/>
    </location>
</feature>
<feature type="region of interest" description="Interaction with human PPIA/CYPA and NUP153" evidence="7">
    <location>
        <begin position="185"/>
        <end position="223"/>
    </location>
</feature>
<feature type="region of interest" description="Dimerization/Multimerization of capsid protein p24" evidence="5">
    <location>
        <begin position="273"/>
        <end position="359"/>
    </location>
</feature>
<feature type="region of interest" description="Disordered" evidence="17">
    <location>
        <begin position="451"/>
        <end position="474"/>
    </location>
</feature>
<feature type="region of interest" description="Dimerization of protease" evidence="5">
    <location>
        <begin position="484"/>
        <end position="488"/>
    </location>
</feature>
<feature type="region of interest" description="Dimerization of protease" evidence="5">
    <location>
        <begin position="532"/>
        <end position="538"/>
    </location>
</feature>
<feature type="region of interest" description="Dimerization of protease" evidence="5">
    <location>
        <begin position="571"/>
        <end position="583"/>
    </location>
</feature>
<feature type="region of interest" description="RT 'primer grip'" evidence="1">
    <location>
        <begin position="809"/>
        <end position="817"/>
    </location>
</feature>
<feature type="short sequence motif" description="Nuclear export signal" evidence="1">
    <location>
        <begin position="16"/>
        <end position="22"/>
    </location>
</feature>
<feature type="short sequence motif" description="Nuclear localization signal" evidence="1">
    <location>
        <begin position="26"/>
        <end position="32"/>
    </location>
</feature>
<feature type="short sequence motif" description="Tryptophan repeat motif" evidence="1">
    <location>
        <begin position="980"/>
        <end position="996"/>
    </location>
</feature>
<feature type="active site" description="For protease activity; shared with dimeric partner" evidence="16">
    <location>
        <position position="508"/>
    </location>
</feature>
<feature type="binding site" evidence="1">
    <location>
        <position position="692"/>
    </location>
    <ligand>
        <name>Mg(2+)</name>
        <dbReference type="ChEBI" id="CHEBI:18420"/>
        <label>1</label>
        <note>catalytic; for reverse transcriptase activity</note>
    </ligand>
</feature>
<feature type="binding site" evidence="1">
    <location>
        <position position="767"/>
    </location>
    <ligand>
        <name>Mg(2+)</name>
        <dbReference type="ChEBI" id="CHEBI:18420"/>
        <label>1</label>
        <note>catalytic; for reverse transcriptase activity</note>
    </ligand>
</feature>
<feature type="binding site" evidence="1">
    <location>
        <position position="768"/>
    </location>
    <ligand>
        <name>Mg(2+)</name>
        <dbReference type="ChEBI" id="CHEBI:18420"/>
        <label>1</label>
        <note>catalytic; for reverse transcriptase activity</note>
    </ligand>
</feature>
<feature type="binding site" evidence="1">
    <location>
        <position position="1025"/>
    </location>
    <ligand>
        <name>Mg(2+)</name>
        <dbReference type="ChEBI" id="CHEBI:18420"/>
        <label>2</label>
        <note>catalytic; for RNase H activity</note>
    </ligand>
</feature>
<feature type="binding site" evidence="1">
    <location>
        <position position="1060"/>
    </location>
    <ligand>
        <name>Mg(2+)</name>
        <dbReference type="ChEBI" id="CHEBI:18420"/>
        <label>2</label>
        <note>catalytic; for RNase H activity</note>
    </ligand>
</feature>
<feature type="binding site" evidence="1">
    <location>
        <position position="1080"/>
    </location>
    <ligand>
        <name>Mg(2+)</name>
        <dbReference type="ChEBI" id="CHEBI:18420"/>
        <label>2</label>
        <note>catalytic; for RNase H activity</note>
    </ligand>
</feature>
<feature type="binding site" evidence="1">
    <location>
        <position position="1131"/>
    </location>
    <ligand>
        <name>Mg(2+)</name>
        <dbReference type="ChEBI" id="CHEBI:18420"/>
        <label>2</label>
        <note>catalytic; for RNase H activity</note>
    </ligand>
</feature>
<feature type="binding site" evidence="13">
    <location>
        <position position="1154"/>
    </location>
    <ligand>
        <name>Zn(2+)</name>
        <dbReference type="ChEBI" id="CHEBI:29105"/>
    </ligand>
</feature>
<feature type="binding site" evidence="13">
    <location>
        <position position="1158"/>
    </location>
    <ligand>
        <name>Zn(2+)</name>
        <dbReference type="ChEBI" id="CHEBI:29105"/>
    </ligand>
</feature>
<feature type="binding site" evidence="13">
    <location>
        <position position="1182"/>
    </location>
    <ligand>
        <name>Zn(2+)</name>
        <dbReference type="ChEBI" id="CHEBI:29105"/>
    </ligand>
</feature>
<feature type="binding site" evidence="13">
    <location>
        <position position="1185"/>
    </location>
    <ligand>
        <name>Zn(2+)</name>
        <dbReference type="ChEBI" id="CHEBI:29105"/>
    </ligand>
</feature>
<feature type="binding site" evidence="1">
    <location>
        <position position="1206"/>
    </location>
    <ligand>
        <name>Mg(2+)</name>
        <dbReference type="ChEBI" id="CHEBI:18420"/>
        <label>3</label>
        <note>catalytic; for integrase activity</note>
    </ligand>
</feature>
<feature type="binding site" evidence="1">
    <location>
        <position position="1258"/>
    </location>
    <ligand>
        <name>Mg(2+)</name>
        <dbReference type="ChEBI" id="CHEBI:18420"/>
        <label>3</label>
        <note>catalytic; for integrase activity</note>
    </ligand>
</feature>
<feature type="binding site" evidence="5">
    <location>
        <position position="1294"/>
    </location>
    <ligand>
        <name>Mg(2+)</name>
        <dbReference type="ChEBI" id="CHEBI:18420"/>
        <label>3</label>
        <note>catalytic; for integrase activity</note>
    </ligand>
</feature>
<feature type="site" description="Cleavage; by viral protease" evidence="1">
    <location>
        <begin position="128"/>
        <end position="129"/>
    </location>
</feature>
<feature type="site" description="Cis/trans isomerization of proline peptide bond; by human PPIA/CYPA" evidence="1">
    <location>
        <begin position="217"/>
        <end position="218"/>
    </location>
</feature>
<feature type="site" description="Cleavage; by viral protease" evidence="1">
    <location>
        <begin position="359"/>
        <end position="360"/>
    </location>
</feature>
<feature type="site" description="Cleavage; by viral protease" evidence="1">
    <location>
        <begin position="372"/>
        <end position="373"/>
    </location>
</feature>
<feature type="site" description="Cleavage; by viral protease" evidence="8">
    <location>
        <begin position="427"/>
        <end position="428"/>
    </location>
</feature>
<feature type="site" description="Cleavage; by viral protease" evidence="1">
    <location>
        <begin position="435"/>
        <end position="436"/>
    </location>
</feature>
<feature type="site" description="Cleavage; by viral protease" evidence="1">
    <location>
        <begin position="483"/>
        <end position="484"/>
    </location>
</feature>
<feature type="site" description="Cleavage; by viral protease" evidence="1">
    <location>
        <begin position="582"/>
        <end position="583"/>
    </location>
</feature>
<feature type="site" description="Essential for RT p66/p51 heterodimerization" evidence="1">
    <location>
        <position position="983"/>
    </location>
</feature>
<feature type="site" description="Essential for RT p66/p51 heterodimerization" evidence="1">
    <location>
        <position position="996"/>
    </location>
</feature>
<feature type="site" description="Cleavage; by viral protease; partial" evidence="1">
    <location>
        <begin position="1022"/>
        <end position="1023"/>
    </location>
</feature>
<feature type="site" description="Cleavage; by viral protease" evidence="1">
    <location>
        <begin position="1142"/>
        <end position="1143"/>
    </location>
</feature>
<feature type="modified residue" description="Phosphotyrosine; by host" evidence="1">
    <location>
        <position position="128"/>
    </location>
</feature>
<feature type="lipid moiety-binding region" description="N-myristoyl glycine; by host" evidence="1">
    <location>
        <position position="2"/>
    </location>
</feature>
<dbReference type="EC" id="3.4.23.16"/>
<dbReference type="EC" id="2.7.7.49"/>
<dbReference type="EC" id="2.7.7.7"/>
<dbReference type="EC" id="3.1.26.13"/>
<dbReference type="EC" id="3.1.13.2"/>
<dbReference type="EC" id="2.7.7.-" evidence="5"/>
<dbReference type="EC" id="3.1.-.-" evidence="5"/>
<dbReference type="EMBL" id="AF005494">
    <property type="protein sequence ID" value="AAD03169.1"/>
    <property type="molecule type" value="Genomic_DNA"/>
</dbReference>
<dbReference type="SMR" id="O89290"/>
<dbReference type="MEROPS" id="A02.001"/>
<dbReference type="PRO" id="PR:O89290"/>
<dbReference type="Proteomes" id="UP000007687">
    <property type="component" value="Segment"/>
</dbReference>
<dbReference type="GO" id="GO:0043657">
    <property type="term" value="C:host cell"/>
    <property type="evidence" value="ECO:0007669"/>
    <property type="project" value="GOC"/>
</dbReference>
<dbReference type="GO" id="GO:0042025">
    <property type="term" value="C:host cell nucleus"/>
    <property type="evidence" value="ECO:0007669"/>
    <property type="project" value="UniProtKB-SubCell"/>
</dbReference>
<dbReference type="GO" id="GO:0020002">
    <property type="term" value="C:host cell plasma membrane"/>
    <property type="evidence" value="ECO:0007669"/>
    <property type="project" value="UniProtKB-SubCell"/>
</dbReference>
<dbReference type="GO" id="GO:0072494">
    <property type="term" value="C:host multivesicular body"/>
    <property type="evidence" value="ECO:0007669"/>
    <property type="project" value="UniProtKB-SubCell"/>
</dbReference>
<dbReference type="GO" id="GO:0016020">
    <property type="term" value="C:membrane"/>
    <property type="evidence" value="ECO:0007669"/>
    <property type="project" value="UniProtKB-KW"/>
</dbReference>
<dbReference type="GO" id="GO:0019013">
    <property type="term" value="C:viral nucleocapsid"/>
    <property type="evidence" value="ECO:0007669"/>
    <property type="project" value="UniProtKB-KW"/>
</dbReference>
<dbReference type="GO" id="GO:0055036">
    <property type="term" value="C:virion membrane"/>
    <property type="evidence" value="ECO:0007669"/>
    <property type="project" value="UniProtKB-SubCell"/>
</dbReference>
<dbReference type="GO" id="GO:0004190">
    <property type="term" value="F:aspartic-type endopeptidase activity"/>
    <property type="evidence" value="ECO:0007669"/>
    <property type="project" value="UniProtKB-KW"/>
</dbReference>
<dbReference type="GO" id="GO:0003677">
    <property type="term" value="F:DNA binding"/>
    <property type="evidence" value="ECO:0007669"/>
    <property type="project" value="UniProtKB-KW"/>
</dbReference>
<dbReference type="GO" id="GO:0003887">
    <property type="term" value="F:DNA-directed DNA polymerase activity"/>
    <property type="evidence" value="ECO:0007669"/>
    <property type="project" value="UniProtKB-KW"/>
</dbReference>
<dbReference type="GO" id="GO:0004533">
    <property type="term" value="F:exoribonuclease H activity"/>
    <property type="evidence" value="ECO:0007669"/>
    <property type="project" value="UniProtKB-EC"/>
</dbReference>
<dbReference type="GO" id="GO:0008289">
    <property type="term" value="F:lipid binding"/>
    <property type="evidence" value="ECO:0007669"/>
    <property type="project" value="UniProtKB-KW"/>
</dbReference>
<dbReference type="GO" id="GO:0035613">
    <property type="term" value="F:RNA stem-loop binding"/>
    <property type="evidence" value="ECO:0007669"/>
    <property type="project" value="TreeGrafter"/>
</dbReference>
<dbReference type="GO" id="GO:0003964">
    <property type="term" value="F:RNA-directed DNA polymerase activity"/>
    <property type="evidence" value="ECO:0007669"/>
    <property type="project" value="UniProtKB-KW"/>
</dbReference>
<dbReference type="GO" id="GO:0004523">
    <property type="term" value="F:RNA-DNA hybrid ribonuclease activity"/>
    <property type="evidence" value="ECO:0007669"/>
    <property type="project" value="InterPro"/>
</dbReference>
<dbReference type="GO" id="GO:0005198">
    <property type="term" value="F:structural molecule activity"/>
    <property type="evidence" value="ECO:0007669"/>
    <property type="project" value="InterPro"/>
</dbReference>
<dbReference type="GO" id="GO:0008270">
    <property type="term" value="F:zinc ion binding"/>
    <property type="evidence" value="ECO:0007669"/>
    <property type="project" value="UniProtKB-KW"/>
</dbReference>
<dbReference type="GO" id="GO:0015074">
    <property type="term" value="P:DNA integration"/>
    <property type="evidence" value="ECO:0007669"/>
    <property type="project" value="UniProtKB-KW"/>
</dbReference>
<dbReference type="GO" id="GO:0006310">
    <property type="term" value="P:DNA recombination"/>
    <property type="evidence" value="ECO:0007669"/>
    <property type="project" value="UniProtKB-KW"/>
</dbReference>
<dbReference type="GO" id="GO:0075713">
    <property type="term" value="P:establishment of integrated proviral latency"/>
    <property type="evidence" value="ECO:0007669"/>
    <property type="project" value="UniProtKB-KW"/>
</dbReference>
<dbReference type="GO" id="GO:0006508">
    <property type="term" value="P:proteolysis"/>
    <property type="evidence" value="ECO:0007669"/>
    <property type="project" value="UniProtKB-KW"/>
</dbReference>
<dbReference type="GO" id="GO:0046718">
    <property type="term" value="P:symbiont entry into host cell"/>
    <property type="evidence" value="ECO:0007669"/>
    <property type="project" value="UniProtKB-KW"/>
</dbReference>
<dbReference type="GO" id="GO:0052151">
    <property type="term" value="P:symbiont-mediated activation of host apoptosis"/>
    <property type="evidence" value="ECO:0007669"/>
    <property type="project" value="UniProtKB-KW"/>
</dbReference>
<dbReference type="GO" id="GO:0039657">
    <property type="term" value="P:symbiont-mediated suppression of host gene expression"/>
    <property type="evidence" value="ECO:0007669"/>
    <property type="project" value="UniProtKB-KW"/>
</dbReference>
<dbReference type="GO" id="GO:0044826">
    <property type="term" value="P:viral genome integration into host DNA"/>
    <property type="evidence" value="ECO:0007669"/>
    <property type="project" value="UniProtKB-KW"/>
</dbReference>
<dbReference type="GO" id="GO:0075732">
    <property type="term" value="P:viral penetration into host nucleus"/>
    <property type="evidence" value="ECO:0007669"/>
    <property type="project" value="UniProtKB-KW"/>
</dbReference>
<dbReference type="GO" id="GO:0075523">
    <property type="term" value="P:viral translational frameshifting"/>
    <property type="evidence" value="ECO:0007669"/>
    <property type="project" value="UniProtKB-KW"/>
</dbReference>
<dbReference type="CDD" id="cd05482">
    <property type="entry name" value="HIV_retropepsin_like"/>
    <property type="match status" value="1"/>
</dbReference>
<dbReference type="CDD" id="cd01645">
    <property type="entry name" value="RT_Rtv"/>
    <property type="match status" value="1"/>
</dbReference>
<dbReference type="FunFam" id="1.10.1200.30:FF:000001">
    <property type="entry name" value="Gag polyprotein"/>
    <property type="match status" value="1"/>
</dbReference>
<dbReference type="FunFam" id="1.10.375.10:FF:000001">
    <property type="entry name" value="Gag polyprotein"/>
    <property type="match status" value="1"/>
</dbReference>
<dbReference type="FunFam" id="4.10.60.10:FF:000001">
    <property type="entry name" value="Gag polyprotein"/>
    <property type="match status" value="1"/>
</dbReference>
<dbReference type="FunFam" id="2.40.70.10:FF:000001">
    <property type="entry name" value="Gag-Pol polyprotein"/>
    <property type="match status" value="1"/>
</dbReference>
<dbReference type="FunFam" id="3.30.420.10:FF:000025">
    <property type="entry name" value="Gag-Pol polyprotein"/>
    <property type="match status" value="1"/>
</dbReference>
<dbReference type="FunFam" id="3.30.420.10:FF:000017">
    <property type="entry name" value="POL polyprotein"/>
    <property type="match status" value="1"/>
</dbReference>
<dbReference type="FunFam" id="3.30.70.270:FF:000016">
    <property type="entry name" value="POL polyprotein"/>
    <property type="match status" value="1"/>
</dbReference>
<dbReference type="Gene3D" id="1.10.10.200">
    <property type="match status" value="1"/>
</dbReference>
<dbReference type="Gene3D" id="1.10.1200.30">
    <property type="match status" value="1"/>
</dbReference>
<dbReference type="Gene3D" id="3.30.70.270">
    <property type="match status" value="3"/>
</dbReference>
<dbReference type="Gene3D" id="2.40.70.10">
    <property type="entry name" value="Acid Proteases"/>
    <property type="match status" value="1"/>
</dbReference>
<dbReference type="Gene3D" id="3.10.10.10">
    <property type="entry name" value="HIV Type 1 Reverse Transcriptase, subunit A, domain 1"/>
    <property type="match status" value="1"/>
</dbReference>
<dbReference type="Gene3D" id="1.10.375.10">
    <property type="entry name" value="Human Immunodeficiency Virus Type 1 Capsid Protein"/>
    <property type="match status" value="1"/>
</dbReference>
<dbReference type="Gene3D" id="1.10.150.90">
    <property type="entry name" value="Immunodeficiency lentiviruses, gag gene matrix protein p17"/>
    <property type="match status" value="1"/>
</dbReference>
<dbReference type="Gene3D" id="2.30.30.10">
    <property type="entry name" value="Integrase, C-terminal domain superfamily, retroviral"/>
    <property type="match status" value="1"/>
</dbReference>
<dbReference type="Gene3D" id="3.30.420.10">
    <property type="entry name" value="Ribonuclease H-like superfamily/Ribonuclease H"/>
    <property type="match status" value="2"/>
</dbReference>
<dbReference type="Gene3D" id="1.20.5.760">
    <property type="entry name" value="Single helix bin"/>
    <property type="match status" value="1"/>
</dbReference>
<dbReference type="Gene3D" id="4.10.60.10">
    <property type="entry name" value="Zinc finger, CCHC-type"/>
    <property type="match status" value="1"/>
</dbReference>
<dbReference type="InterPro" id="IPR001969">
    <property type="entry name" value="Aspartic_peptidase_AS"/>
</dbReference>
<dbReference type="InterPro" id="IPR043502">
    <property type="entry name" value="DNA/RNA_pol_sf"/>
</dbReference>
<dbReference type="InterPro" id="IPR045345">
    <property type="entry name" value="Gag_p24_C"/>
</dbReference>
<dbReference type="InterPro" id="IPR017856">
    <property type="entry name" value="Integrase-like_N"/>
</dbReference>
<dbReference type="InterPro" id="IPR036862">
    <property type="entry name" value="Integrase_C_dom_sf_retrovir"/>
</dbReference>
<dbReference type="InterPro" id="IPR001037">
    <property type="entry name" value="Integrase_C_retrovir"/>
</dbReference>
<dbReference type="InterPro" id="IPR001584">
    <property type="entry name" value="Integrase_cat-core"/>
</dbReference>
<dbReference type="InterPro" id="IPR003308">
    <property type="entry name" value="Integrase_Zn-bd_dom_N"/>
</dbReference>
<dbReference type="InterPro" id="IPR000071">
    <property type="entry name" value="Lentvrl_matrix_N"/>
</dbReference>
<dbReference type="InterPro" id="IPR012344">
    <property type="entry name" value="Matrix_HIV/RSV_N"/>
</dbReference>
<dbReference type="InterPro" id="IPR001995">
    <property type="entry name" value="Peptidase_A2_cat"/>
</dbReference>
<dbReference type="InterPro" id="IPR021109">
    <property type="entry name" value="Peptidase_aspartic_dom_sf"/>
</dbReference>
<dbReference type="InterPro" id="IPR034170">
    <property type="entry name" value="Retropepsin-like_cat_dom"/>
</dbReference>
<dbReference type="InterPro" id="IPR018061">
    <property type="entry name" value="Retropepsins"/>
</dbReference>
<dbReference type="InterPro" id="IPR008916">
    <property type="entry name" value="Retrov_capsid_C"/>
</dbReference>
<dbReference type="InterPro" id="IPR008919">
    <property type="entry name" value="Retrov_capsid_N"/>
</dbReference>
<dbReference type="InterPro" id="IPR010999">
    <property type="entry name" value="Retrovr_matrix"/>
</dbReference>
<dbReference type="InterPro" id="IPR043128">
    <property type="entry name" value="Rev_trsase/Diguanyl_cyclase"/>
</dbReference>
<dbReference type="InterPro" id="IPR012337">
    <property type="entry name" value="RNaseH-like_sf"/>
</dbReference>
<dbReference type="InterPro" id="IPR002156">
    <property type="entry name" value="RNaseH_domain"/>
</dbReference>
<dbReference type="InterPro" id="IPR036397">
    <property type="entry name" value="RNaseH_sf"/>
</dbReference>
<dbReference type="InterPro" id="IPR000477">
    <property type="entry name" value="RT_dom"/>
</dbReference>
<dbReference type="InterPro" id="IPR010659">
    <property type="entry name" value="RVT_connect"/>
</dbReference>
<dbReference type="InterPro" id="IPR010661">
    <property type="entry name" value="RVT_thumb"/>
</dbReference>
<dbReference type="InterPro" id="IPR001878">
    <property type="entry name" value="Znf_CCHC"/>
</dbReference>
<dbReference type="InterPro" id="IPR036875">
    <property type="entry name" value="Znf_CCHC_sf"/>
</dbReference>
<dbReference type="PANTHER" id="PTHR41694">
    <property type="entry name" value="ENDOGENOUS RETROVIRUS GROUP K MEMBER POL PROTEIN"/>
    <property type="match status" value="1"/>
</dbReference>
<dbReference type="PANTHER" id="PTHR41694:SF3">
    <property type="entry name" value="RNA-DIRECTED DNA POLYMERASE-RELATED"/>
    <property type="match status" value="1"/>
</dbReference>
<dbReference type="Pfam" id="PF00540">
    <property type="entry name" value="Gag_p17"/>
    <property type="match status" value="1"/>
</dbReference>
<dbReference type="Pfam" id="PF19317">
    <property type="entry name" value="Gag_p24_C"/>
    <property type="match status" value="1"/>
</dbReference>
<dbReference type="Pfam" id="PF00552">
    <property type="entry name" value="IN_DBD_C"/>
    <property type="match status" value="1"/>
</dbReference>
<dbReference type="Pfam" id="PF02022">
    <property type="entry name" value="Integrase_Zn"/>
    <property type="match status" value="1"/>
</dbReference>
<dbReference type="Pfam" id="PF00075">
    <property type="entry name" value="RNase_H"/>
    <property type="match status" value="1"/>
</dbReference>
<dbReference type="Pfam" id="PF00665">
    <property type="entry name" value="rve"/>
    <property type="match status" value="1"/>
</dbReference>
<dbReference type="Pfam" id="PF00077">
    <property type="entry name" value="RVP"/>
    <property type="match status" value="1"/>
</dbReference>
<dbReference type="Pfam" id="PF00078">
    <property type="entry name" value="RVT_1"/>
    <property type="match status" value="1"/>
</dbReference>
<dbReference type="Pfam" id="PF06815">
    <property type="entry name" value="RVT_connect"/>
    <property type="match status" value="1"/>
</dbReference>
<dbReference type="Pfam" id="PF06817">
    <property type="entry name" value="RVT_thumb"/>
    <property type="match status" value="1"/>
</dbReference>
<dbReference type="Pfam" id="PF00098">
    <property type="entry name" value="zf-CCHC"/>
    <property type="match status" value="2"/>
</dbReference>
<dbReference type="PRINTS" id="PR00234">
    <property type="entry name" value="HIV1MATRIX"/>
</dbReference>
<dbReference type="SMART" id="SM00343">
    <property type="entry name" value="ZnF_C2HC"/>
    <property type="match status" value="2"/>
</dbReference>
<dbReference type="SUPFAM" id="SSF50630">
    <property type="entry name" value="Acid proteases"/>
    <property type="match status" value="1"/>
</dbReference>
<dbReference type="SUPFAM" id="SSF50122">
    <property type="entry name" value="DNA-binding domain of retroviral integrase"/>
    <property type="match status" value="1"/>
</dbReference>
<dbReference type="SUPFAM" id="SSF56672">
    <property type="entry name" value="DNA/RNA polymerases"/>
    <property type="match status" value="1"/>
</dbReference>
<dbReference type="SUPFAM" id="SSF46919">
    <property type="entry name" value="N-terminal Zn binding domain of HIV integrase"/>
    <property type="match status" value="1"/>
</dbReference>
<dbReference type="SUPFAM" id="SSF47836">
    <property type="entry name" value="Retroviral matrix proteins"/>
    <property type="match status" value="1"/>
</dbReference>
<dbReference type="SUPFAM" id="SSF47353">
    <property type="entry name" value="Retrovirus capsid dimerization domain-like"/>
    <property type="match status" value="1"/>
</dbReference>
<dbReference type="SUPFAM" id="SSF47943">
    <property type="entry name" value="Retrovirus capsid protein, N-terminal core domain"/>
    <property type="match status" value="1"/>
</dbReference>
<dbReference type="SUPFAM" id="SSF57756">
    <property type="entry name" value="Retrovirus zinc finger-like domains"/>
    <property type="match status" value="1"/>
</dbReference>
<dbReference type="SUPFAM" id="SSF53098">
    <property type="entry name" value="Ribonuclease H-like"/>
    <property type="match status" value="2"/>
</dbReference>
<dbReference type="PROSITE" id="PS50175">
    <property type="entry name" value="ASP_PROT_RETROV"/>
    <property type="match status" value="1"/>
</dbReference>
<dbReference type="PROSITE" id="PS00141">
    <property type="entry name" value="ASP_PROTEASE"/>
    <property type="match status" value="1"/>
</dbReference>
<dbReference type="PROSITE" id="PS50994">
    <property type="entry name" value="INTEGRASE"/>
    <property type="match status" value="1"/>
</dbReference>
<dbReference type="PROSITE" id="PS51027">
    <property type="entry name" value="INTEGRASE_DBD"/>
    <property type="match status" value="1"/>
</dbReference>
<dbReference type="PROSITE" id="PS50879">
    <property type="entry name" value="RNASE_H_1"/>
    <property type="match status" value="1"/>
</dbReference>
<dbReference type="PROSITE" id="PS50878">
    <property type="entry name" value="RT_POL"/>
    <property type="match status" value="1"/>
</dbReference>
<dbReference type="PROSITE" id="PS50158">
    <property type="entry name" value="ZF_CCHC"/>
    <property type="match status" value="2"/>
</dbReference>
<dbReference type="PROSITE" id="PS50876">
    <property type="entry name" value="ZF_INTEGRASE"/>
    <property type="match status" value="1"/>
</dbReference>
<protein>
    <recommendedName>
        <fullName>Gag-Pol polyprotein</fullName>
    </recommendedName>
    <alternativeName>
        <fullName>Pr160Gag-Pol</fullName>
    </alternativeName>
    <component>
        <recommendedName>
            <fullName>Matrix protein p17</fullName>
            <shortName>MA</shortName>
        </recommendedName>
    </component>
    <component>
        <recommendedName>
            <fullName>Capsid protein p24</fullName>
            <shortName>CA</shortName>
        </recommendedName>
    </component>
    <component>
        <recommendedName>
            <fullName evidence="7">Spacer peptide 1</fullName>
            <shortName>SP1</shortName>
        </recommendedName>
        <alternativeName>
            <fullName>p2</fullName>
        </alternativeName>
    </component>
    <component>
        <recommendedName>
            <fullName>Nucleocapsid protein p7</fullName>
            <shortName>NC</shortName>
        </recommendedName>
    </component>
    <component>
        <recommendedName>
            <fullName>Transframe peptide</fullName>
            <shortName>TF</shortName>
        </recommendedName>
    </component>
    <component>
        <recommendedName>
            <fullName>p6-pol</fullName>
            <shortName>p6*</shortName>
        </recommendedName>
    </component>
    <component>
        <recommendedName>
            <fullName>Protease</fullName>
            <ecNumber>3.4.23.16</ecNumber>
        </recommendedName>
        <alternativeName>
            <fullName>PR</fullName>
        </alternativeName>
        <alternativeName>
            <fullName>Retropepsin</fullName>
        </alternativeName>
    </component>
    <component>
        <recommendedName>
            <fullName>Reverse transcriptase/ribonuclease H</fullName>
            <ecNumber>2.7.7.49</ecNumber>
            <ecNumber>2.7.7.7</ecNumber>
            <ecNumber>3.1.26.13</ecNumber>
        </recommendedName>
        <alternativeName>
            <fullName>Exoribonuclease H</fullName>
            <ecNumber>3.1.13.2</ecNumber>
        </alternativeName>
        <alternativeName>
            <fullName>p66 RT</fullName>
        </alternativeName>
    </component>
    <component>
        <recommendedName>
            <fullName>p51 RT</fullName>
        </recommendedName>
    </component>
    <component>
        <recommendedName>
            <fullName>p15</fullName>
        </recommendedName>
    </component>
    <component>
        <recommendedName>
            <fullName>Integrase</fullName>
            <shortName>IN</shortName>
            <ecNumber evidence="5">2.7.7.-</ecNumber>
            <ecNumber evidence="5">3.1.-.-</ecNumber>
        </recommendedName>
    </component>
</protein>
<organismHost>
    <name type="scientific">Homo sapiens</name>
    <name type="common">Human</name>
    <dbReference type="NCBI Taxonomy" id="9606"/>
</organismHost>
<gene>
    <name type="primary">gag-pol</name>
</gene>
<accession>O89290</accession>
<keyword id="KW-1073">Activation of host caspases by virus</keyword>
<keyword id="KW-0014">AIDS</keyword>
<keyword id="KW-0064">Aspartyl protease</keyword>
<keyword id="KW-0167">Capsid protein</keyword>
<keyword id="KW-0229">DNA integration</keyword>
<keyword id="KW-0233">DNA recombination</keyword>
<keyword id="KW-0238">DNA-binding</keyword>
<keyword id="KW-0239">DNA-directed DNA polymerase</keyword>
<keyword id="KW-0255">Endonuclease</keyword>
<keyword id="KW-1262">Eukaryotic host gene expression shutoff by virus</keyword>
<keyword id="KW-1193">Eukaryotic host translation shutoff by virus</keyword>
<keyword id="KW-1032">Host cell membrane</keyword>
<keyword id="KW-1035">Host cytoplasm</keyword>
<keyword id="KW-1039">Host endosome</keyword>
<keyword id="KW-1190">Host gene expression shutoff by virus</keyword>
<keyword id="KW-1043">Host membrane</keyword>
<keyword id="KW-1048">Host nucleus</keyword>
<keyword id="KW-0945">Host-virus interaction</keyword>
<keyword id="KW-0378">Hydrolase</keyword>
<keyword id="KW-0446">Lipid-binding</keyword>
<keyword id="KW-0449">Lipoprotein</keyword>
<keyword id="KW-0460">Magnesium</keyword>
<keyword id="KW-0472">Membrane</keyword>
<keyword id="KW-0479">Metal-binding</keyword>
<keyword id="KW-1119">Modulation of host cell apoptosis by virus</keyword>
<keyword id="KW-0511">Multifunctional enzyme</keyword>
<keyword id="KW-0519">Myristate</keyword>
<keyword id="KW-0540">Nuclease</keyword>
<keyword id="KW-0548">Nucleotidyltransferase</keyword>
<keyword id="KW-0597">Phosphoprotein</keyword>
<keyword id="KW-0645">Protease</keyword>
<keyword id="KW-1185">Reference proteome</keyword>
<keyword id="KW-0677">Repeat</keyword>
<keyword id="KW-0688">Ribosomal frameshifting</keyword>
<keyword id="KW-0694">RNA-binding</keyword>
<keyword id="KW-0695">RNA-directed DNA polymerase</keyword>
<keyword id="KW-0808">Transferase</keyword>
<keyword id="KW-1179">Viral genome integration</keyword>
<keyword id="KW-0543">Viral nucleoprotein</keyword>
<keyword id="KW-1163">Viral penetration into host nucleus</keyword>
<keyword id="KW-1188">Viral release from host cell</keyword>
<keyword id="KW-0946">Virion</keyword>
<keyword id="KW-0917">Virion maturation</keyword>
<keyword id="KW-1160">Virus entry into host cell</keyword>
<keyword id="KW-0862">Zinc</keyword>
<keyword id="KW-0863">Zinc-finger</keyword>
<proteinExistence type="inferred from homology"/>
<organism>
    <name type="scientific">Human immunodeficiency virus type 1 group M subtype F1 (isolate 93BR020)</name>
    <name type="common">HIV-1</name>
    <dbReference type="NCBI Taxonomy" id="388814"/>
    <lineage>
        <taxon>Viruses</taxon>
        <taxon>Riboviria</taxon>
        <taxon>Pararnavirae</taxon>
        <taxon>Artverviricota</taxon>
        <taxon>Revtraviricetes</taxon>
        <taxon>Ortervirales</taxon>
        <taxon>Retroviridae</taxon>
        <taxon>Orthoretrovirinae</taxon>
        <taxon>Lentivirus</taxon>
        <taxon>Human immunodeficiency virus type 1</taxon>
    </lineage>
</organism>